<gene>
    <name evidence="1" type="primary">ssuB3</name>
    <name type="ordered locus">PSPPH_4903</name>
</gene>
<sequence length="270" mass="29573">MTSLKQQPPHLLRGIPLAVRNLKKAFGTREVLKDIDLHIPAGQFVAIVGRSGCGKSTLLRLLAGLDKPTEGQLLAGSAPLDDAREDTRLMFQEARLLPWKKIIDNVGLGLSGDWRAQALEALEAVGLAERANEWPAALSGGQKQRVALARALIHKPRLLLLDEPLGALDALTRIEMQQLIEKLWHQYGFTVLLVTHDVSEAVAIADRVILIEEGQIGLDLLVDLPRPRVRGSHRLAALEAEVLNRVLALPGSPPDPEPFSPLPTQLRWAN</sequence>
<protein>
    <recommendedName>
        <fullName evidence="1">Aliphatic sulfonates import ATP-binding protein SsuB 3</fullName>
        <ecNumber evidence="1">7.6.2.14</ecNumber>
    </recommendedName>
</protein>
<accession>Q48CA0</accession>
<dbReference type="EC" id="7.6.2.14" evidence="1"/>
<dbReference type="EMBL" id="CP000058">
    <property type="protein sequence ID" value="AAZ37420.1"/>
    <property type="molecule type" value="Genomic_DNA"/>
</dbReference>
<dbReference type="SMR" id="Q48CA0"/>
<dbReference type="KEGG" id="psp:PSPPH_4903"/>
<dbReference type="eggNOG" id="COG1116">
    <property type="taxonomic scope" value="Bacteria"/>
</dbReference>
<dbReference type="HOGENOM" id="CLU_000604_1_22_6"/>
<dbReference type="Proteomes" id="UP000000551">
    <property type="component" value="Chromosome"/>
</dbReference>
<dbReference type="GO" id="GO:0005886">
    <property type="term" value="C:plasma membrane"/>
    <property type="evidence" value="ECO:0007669"/>
    <property type="project" value="UniProtKB-SubCell"/>
</dbReference>
<dbReference type="GO" id="GO:0005524">
    <property type="term" value="F:ATP binding"/>
    <property type="evidence" value="ECO:0007669"/>
    <property type="project" value="UniProtKB-KW"/>
</dbReference>
<dbReference type="GO" id="GO:0016887">
    <property type="term" value="F:ATP hydrolysis activity"/>
    <property type="evidence" value="ECO:0007669"/>
    <property type="project" value="InterPro"/>
</dbReference>
<dbReference type="CDD" id="cd03293">
    <property type="entry name" value="ABC_NrtD_SsuB_transporters"/>
    <property type="match status" value="1"/>
</dbReference>
<dbReference type="FunFam" id="3.40.50.300:FF:000653">
    <property type="entry name" value="Aliphatic sulfonates import ATP-binding protein SsuB"/>
    <property type="match status" value="1"/>
</dbReference>
<dbReference type="Gene3D" id="3.40.50.300">
    <property type="entry name" value="P-loop containing nucleotide triphosphate hydrolases"/>
    <property type="match status" value="1"/>
</dbReference>
<dbReference type="InterPro" id="IPR003593">
    <property type="entry name" value="AAA+_ATPase"/>
</dbReference>
<dbReference type="InterPro" id="IPR003439">
    <property type="entry name" value="ABC_transporter-like_ATP-bd"/>
</dbReference>
<dbReference type="InterPro" id="IPR017871">
    <property type="entry name" value="ABC_transporter-like_CS"/>
</dbReference>
<dbReference type="InterPro" id="IPR050166">
    <property type="entry name" value="ABC_transporter_ATP-bind"/>
</dbReference>
<dbReference type="InterPro" id="IPR027417">
    <property type="entry name" value="P-loop_NTPase"/>
</dbReference>
<dbReference type="NCBIfam" id="NF008420">
    <property type="entry name" value="PRK11247.1"/>
    <property type="match status" value="1"/>
</dbReference>
<dbReference type="PANTHER" id="PTHR42788:SF17">
    <property type="entry name" value="ALIPHATIC SULFONATES IMPORT ATP-BINDING PROTEIN SSUB"/>
    <property type="match status" value="1"/>
</dbReference>
<dbReference type="PANTHER" id="PTHR42788">
    <property type="entry name" value="TAURINE IMPORT ATP-BINDING PROTEIN-RELATED"/>
    <property type="match status" value="1"/>
</dbReference>
<dbReference type="Pfam" id="PF00005">
    <property type="entry name" value="ABC_tran"/>
    <property type="match status" value="1"/>
</dbReference>
<dbReference type="SMART" id="SM00382">
    <property type="entry name" value="AAA"/>
    <property type="match status" value="1"/>
</dbReference>
<dbReference type="SUPFAM" id="SSF52540">
    <property type="entry name" value="P-loop containing nucleoside triphosphate hydrolases"/>
    <property type="match status" value="1"/>
</dbReference>
<dbReference type="PROSITE" id="PS00211">
    <property type="entry name" value="ABC_TRANSPORTER_1"/>
    <property type="match status" value="1"/>
</dbReference>
<dbReference type="PROSITE" id="PS50893">
    <property type="entry name" value="ABC_TRANSPORTER_2"/>
    <property type="match status" value="1"/>
</dbReference>
<dbReference type="PROSITE" id="PS51291">
    <property type="entry name" value="SSUB"/>
    <property type="match status" value="1"/>
</dbReference>
<proteinExistence type="inferred from homology"/>
<keyword id="KW-0067">ATP-binding</keyword>
<keyword id="KW-0997">Cell inner membrane</keyword>
<keyword id="KW-1003">Cell membrane</keyword>
<keyword id="KW-0472">Membrane</keyword>
<keyword id="KW-0547">Nucleotide-binding</keyword>
<keyword id="KW-1278">Translocase</keyword>
<keyword id="KW-0813">Transport</keyword>
<evidence type="ECO:0000255" key="1">
    <source>
        <dbReference type="HAMAP-Rule" id="MF_01724"/>
    </source>
</evidence>
<organism>
    <name type="scientific">Pseudomonas savastanoi pv. phaseolicola (strain 1448A / Race 6)</name>
    <name type="common">Pseudomonas syringae pv. phaseolicola (strain 1448A / Race 6)</name>
    <dbReference type="NCBI Taxonomy" id="264730"/>
    <lineage>
        <taxon>Bacteria</taxon>
        <taxon>Pseudomonadati</taxon>
        <taxon>Pseudomonadota</taxon>
        <taxon>Gammaproteobacteria</taxon>
        <taxon>Pseudomonadales</taxon>
        <taxon>Pseudomonadaceae</taxon>
        <taxon>Pseudomonas</taxon>
    </lineage>
</organism>
<name>SSUB3_PSE14</name>
<comment type="function">
    <text evidence="1">Part of the ABC transporter complex SsuABC involved in aliphatic sulfonates import. Responsible for energy coupling to the transport system.</text>
</comment>
<comment type="catalytic activity">
    <reaction evidence="1">
        <text>ATP + H2O + aliphatic sulfonate-[sulfonate-binding protein]Side 1 = ADP + phosphate + aliphatic sulfonateSide 2 + [sulfonate-binding protein]Side 1.</text>
        <dbReference type="EC" id="7.6.2.14"/>
    </reaction>
</comment>
<comment type="subunit">
    <text evidence="1">The complex is composed of two ATP-binding proteins (SsuB), two transmembrane proteins (SsuC) and a solute-binding protein (SsuA).</text>
</comment>
<comment type="subcellular location">
    <subcellularLocation>
        <location evidence="1">Cell inner membrane</location>
        <topology evidence="1">Peripheral membrane protein</topology>
    </subcellularLocation>
</comment>
<comment type="similarity">
    <text evidence="1">Belongs to the ABC transporter superfamily. Aliphatic sulfonates importer (TC 3.A.1.17.2) family.</text>
</comment>
<feature type="chain" id="PRO_0000279939" description="Aliphatic sulfonates import ATP-binding protein SsuB 3">
    <location>
        <begin position="1"/>
        <end position="270"/>
    </location>
</feature>
<feature type="domain" description="ABC transporter" evidence="1">
    <location>
        <begin position="17"/>
        <end position="238"/>
    </location>
</feature>
<feature type="binding site" evidence="1">
    <location>
        <begin position="49"/>
        <end position="56"/>
    </location>
    <ligand>
        <name>ATP</name>
        <dbReference type="ChEBI" id="CHEBI:30616"/>
    </ligand>
</feature>
<reference key="1">
    <citation type="journal article" date="2005" name="J. Bacteriol.">
        <title>Whole-genome sequence analysis of Pseudomonas syringae pv. phaseolicola 1448A reveals divergence among pathovars in genes involved in virulence and transposition.</title>
        <authorList>
            <person name="Joardar V."/>
            <person name="Lindeberg M."/>
            <person name="Jackson R.W."/>
            <person name="Selengut J."/>
            <person name="Dodson R."/>
            <person name="Brinkac L.M."/>
            <person name="Daugherty S.C."/>
            <person name="DeBoy R.T."/>
            <person name="Durkin A.S."/>
            <person name="Gwinn Giglio M."/>
            <person name="Madupu R."/>
            <person name="Nelson W.C."/>
            <person name="Rosovitz M.J."/>
            <person name="Sullivan S.A."/>
            <person name="Crabtree J."/>
            <person name="Creasy T."/>
            <person name="Davidsen T.M."/>
            <person name="Haft D.H."/>
            <person name="Zafar N."/>
            <person name="Zhou L."/>
            <person name="Halpin R."/>
            <person name="Holley T."/>
            <person name="Khouri H.M."/>
            <person name="Feldblyum T.V."/>
            <person name="White O."/>
            <person name="Fraser C.M."/>
            <person name="Chatterjee A.K."/>
            <person name="Cartinhour S."/>
            <person name="Schneider D."/>
            <person name="Mansfield J.W."/>
            <person name="Collmer A."/>
            <person name="Buell R."/>
        </authorList>
    </citation>
    <scope>NUCLEOTIDE SEQUENCE [LARGE SCALE GENOMIC DNA]</scope>
    <source>
        <strain>1448A / Race 6</strain>
    </source>
</reference>